<dbReference type="EC" id="6.1.1.14" evidence="1"/>
<dbReference type="EMBL" id="CP001340">
    <property type="protein sequence ID" value="ACL94868.1"/>
    <property type="molecule type" value="Genomic_DNA"/>
</dbReference>
<dbReference type="RefSeq" id="WP_010919218.1">
    <property type="nucleotide sequence ID" value="NC_011916.1"/>
</dbReference>
<dbReference type="RefSeq" id="YP_002516776.1">
    <property type="nucleotide sequence ID" value="NC_011916.1"/>
</dbReference>
<dbReference type="SMR" id="B8H516"/>
<dbReference type="GeneID" id="7330132"/>
<dbReference type="KEGG" id="ccs:CCNA_01403"/>
<dbReference type="PATRIC" id="fig|565050.3.peg.1388"/>
<dbReference type="HOGENOM" id="CLU_057066_1_0_5"/>
<dbReference type="OrthoDB" id="9802183at2"/>
<dbReference type="PhylomeDB" id="B8H516"/>
<dbReference type="Proteomes" id="UP000001364">
    <property type="component" value="Chromosome"/>
</dbReference>
<dbReference type="GO" id="GO:0005829">
    <property type="term" value="C:cytosol"/>
    <property type="evidence" value="ECO:0007669"/>
    <property type="project" value="TreeGrafter"/>
</dbReference>
<dbReference type="GO" id="GO:0005524">
    <property type="term" value="F:ATP binding"/>
    <property type="evidence" value="ECO:0007669"/>
    <property type="project" value="UniProtKB-UniRule"/>
</dbReference>
<dbReference type="GO" id="GO:0004820">
    <property type="term" value="F:glycine-tRNA ligase activity"/>
    <property type="evidence" value="ECO:0007669"/>
    <property type="project" value="UniProtKB-UniRule"/>
</dbReference>
<dbReference type="GO" id="GO:0006426">
    <property type="term" value="P:glycyl-tRNA aminoacylation"/>
    <property type="evidence" value="ECO:0007669"/>
    <property type="project" value="UniProtKB-UniRule"/>
</dbReference>
<dbReference type="FunFam" id="3.30.930.10:FF:000006">
    <property type="entry name" value="Glycine--tRNA ligase alpha subunit"/>
    <property type="match status" value="1"/>
</dbReference>
<dbReference type="Gene3D" id="3.30.930.10">
    <property type="entry name" value="Bira Bifunctional Protein, Domain 2"/>
    <property type="match status" value="1"/>
</dbReference>
<dbReference type="Gene3D" id="1.20.58.180">
    <property type="entry name" value="Class II aaRS and biotin synthetases, domain 2"/>
    <property type="match status" value="1"/>
</dbReference>
<dbReference type="HAMAP" id="MF_00254">
    <property type="entry name" value="Gly_tRNA_synth_alpha"/>
    <property type="match status" value="1"/>
</dbReference>
<dbReference type="InterPro" id="IPR045864">
    <property type="entry name" value="aa-tRNA-synth_II/BPL/LPL"/>
</dbReference>
<dbReference type="InterPro" id="IPR006194">
    <property type="entry name" value="Gly-tRNA-synth_heterodimer"/>
</dbReference>
<dbReference type="InterPro" id="IPR002310">
    <property type="entry name" value="Gly-tRNA_ligase_asu"/>
</dbReference>
<dbReference type="NCBIfam" id="TIGR00388">
    <property type="entry name" value="glyQ"/>
    <property type="match status" value="1"/>
</dbReference>
<dbReference type="NCBIfam" id="NF006827">
    <property type="entry name" value="PRK09348.1"/>
    <property type="match status" value="1"/>
</dbReference>
<dbReference type="PANTHER" id="PTHR30075:SF2">
    <property type="entry name" value="GLYCINE--TRNA LIGASE, CHLOROPLASTIC_MITOCHONDRIAL 2"/>
    <property type="match status" value="1"/>
</dbReference>
<dbReference type="PANTHER" id="PTHR30075">
    <property type="entry name" value="GLYCYL-TRNA SYNTHETASE"/>
    <property type="match status" value="1"/>
</dbReference>
<dbReference type="Pfam" id="PF02091">
    <property type="entry name" value="tRNA-synt_2e"/>
    <property type="match status" value="1"/>
</dbReference>
<dbReference type="PRINTS" id="PR01044">
    <property type="entry name" value="TRNASYNTHGA"/>
</dbReference>
<dbReference type="SUPFAM" id="SSF55681">
    <property type="entry name" value="Class II aaRS and biotin synthetases"/>
    <property type="match status" value="1"/>
</dbReference>
<dbReference type="PROSITE" id="PS50861">
    <property type="entry name" value="AA_TRNA_LIGASE_II_GLYAB"/>
    <property type="match status" value="1"/>
</dbReference>
<protein>
    <recommendedName>
        <fullName evidence="1">Glycine--tRNA ligase alpha subunit</fullName>
        <ecNumber evidence="1">6.1.1.14</ecNumber>
    </recommendedName>
    <alternativeName>
        <fullName evidence="1">Glycyl-tRNA synthetase alpha subunit</fullName>
        <shortName evidence="1">GlyRS</shortName>
    </alternativeName>
</protein>
<gene>
    <name evidence="1" type="primary">glyQ</name>
    <name type="ordered locus">CCNA_01403</name>
</gene>
<evidence type="ECO:0000255" key="1">
    <source>
        <dbReference type="HAMAP-Rule" id="MF_00254"/>
    </source>
</evidence>
<feature type="chain" id="PRO_1000125542" description="Glycine--tRNA ligase alpha subunit">
    <location>
        <begin position="1"/>
        <end position="299"/>
    </location>
</feature>
<name>SYGA_CAUVN</name>
<sequence length="299" mass="33845">MSREKPKSFQSLILTLHDYWSRQGCVILQPHDVEVGAGTLHPATVLRALGPKAWNAAYVQPSRRPGDGRYGENPNRLQHYYQYQVILKPNPENMQDLYLGSLEAIGLDLRTHDIRFVEDDWENPTVGAWGLGWEVWCDGMEVSQYTYFQQVGGLDVNPVAGELTYGLERLAMYVFGVDNVYDLPFNDPDSPLGATTYGDVFLENERQQSEANFHGFDVAVLKQQFEQMEEQVPLMLARSYQDKALVLPAYDMVLKASHLFNLMNARGAIAVAERASYIGRIRDLCKMCASAWVEQQEAA</sequence>
<accession>B8H516</accession>
<organism>
    <name type="scientific">Caulobacter vibrioides (strain NA1000 / CB15N)</name>
    <name type="common">Caulobacter crescentus</name>
    <dbReference type="NCBI Taxonomy" id="565050"/>
    <lineage>
        <taxon>Bacteria</taxon>
        <taxon>Pseudomonadati</taxon>
        <taxon>Pseudomonadota</taxon>
        <taxon>Alphaproteobacteria</taxon>
        <taxon>Caulobacterales</taxon>
        <taxon>Caulobacteraceae</taxon>
        <taxon>Caulobacter</taxon>
    </lineage>
</organism>
<comment type="catalytic activity">
    <reaction evidence="1">
        <text>tRNA(Gly) + glycine + ATP = glycyl-tRNA(Gly) + AMP + diphosphate</text>
        <dbReference type="Rhea" id="RHEA:16013"/>
        <dbReference type="Rhea" id="RHEA-COMP:9664"/>
        <dbReference type="Rhea" id="RHEA-COMP:9683"/>
        <dbReference type="ChEBI" id="CHEBI:30616"/>
        <dbReference type="ChEBI" id="CHEBI:33019"/>
        <dbReference type="ChEBI" id="CHEBI:57305"/>
        <dbReference type="ChEBI" id="CHEBI:78442"/>
        <dbReference type="ChEBI" id="CHEBI:78522"/>
        <dbReference type="ChEBI" id="CHEBI:456215"/>
        <dbReference type="EC" id="6.1.1.14"/>
    </reaction>
</comment>
<comment type="subunit">
    <text evidence="1">Tetramer of two alpha and two beta subunits.</text>
</comment>
<comment type="subcellular location">
    <subcellularLocation>
        <location evidence="1">Cytoplasm</location>
    </subcellularLocation>
</comment>
<comment type="similarity">
    <text evidence="1">Belongs to the class-II aminoacyl-tRNA synthetase family.</text>
</comment>
<reference key="1">
    <citation type="journal article" date="2010" name="J. Bacteriol.">
        <title>The genetic basis of laboratory adaptation in Caulobacter crescentus.</title>
        <authorList>
            <person name="Marks M.E."/>
            <person name="Castro-Rojas C.M."/>
            <person name="Teiling C."/>
            <person name="Du L."/>
            <person name="Kapatral V."/>
            <person name="Walunas T.L."/>
            <person name="Crosson S."/>
        </authorList>
    </citation>
    <scope>NUCLEOTIDE SEQUENCE [LARGE SCALE GENOMIC DNA]</scope>
    <source>
        <strain>NA1000 / CB15N</strain>
    </source>
</reference>
<proteinExistence type="inferred from homology"/>
<keyword id="KW-0030">Aminoacyl-tRNA synthetase</keyword>
<keyword id="KW-0067">ATP-binding</keyword>
<keyword id="KW-0963">Cytoplasm</keyword>
<keyword id="KW-0436">Ligase</keyword>
<keyword id="KW-0547">Nucleotide-binding</keyword>
<keyword id="KW-0648">Protein biosynthesis</keyword>
<keyword id="KW-1185">Reference proteome</keyword>